<evidence type="ECO:0000255" key="1">
    <source>
        <dbReference type="HAMAP-Rule" id="MF_00480"/>
    </source>
</evidence>
<evidence type="ECO:0000305" key="2"/>
<feature type="chain" id="PRO_0000124340" description="Small ribosomal subunit protein uS7">
    <location>
        <begin position="1"/>
        <end position="156"/>
    </location>
</feature>
<protein>
    <recommendedName>
        <fullName evidence="1">Small ribosomal subunit protein uS7</fullName>
    </recommendedName>
    <alternativeName>
        <fullName evidence="2">30S ribosomal protein S7</fullName>
    </alternativeName>
</protein>
<reference key="1">
    <citation type="journal article" date="1989" name="Mol. Gen. Genet.">
        <title>Characterization of the str operon genes from Spirulina platensis and their evolutionary relationship to those of other prokaryotes.</title>
        <authorList>
            <person name="Buttarelli F.R."/>
            <person name="Calogero R.A."/>
            <person name="Tiboni O."/>
            <person name="Gualerzi C.O."/>
            <person name="Pon C.L."/>
        </authorList>
    </citation>
    <scope>NUCLEOTIDE SEQUENCE [GENOMIC DNA]</scope>
</reference>
<proteinExistence type="inferred from homology"/>
<gene>
    <name evidence="1" type="primary">rpsG</name>
    <name evidence="1" type="synonym">rps7</name>
</gene>
<comment type="function">
    <text evidence="1">One of the primary rRNA binding proteins, it binds directly to 16S rRNA where it nucleates assembly of the head domain of the 30S subunit. Is located at the subunit interface close to the decoding center, probably blocks exit of the E-site tRNA.</text>
</comment>
<comment type="subunit">
    <text evidence="1">Part of the 30S ribosomal subunit. Contacts proteins S9 and S11.</text>
</comment>
<comment type="similarity">
    <text evidence="1">Belongs to the universal ribosomal protein uS7 family.</text>
</comment>
<keyword id="KW-0687">Ribonucleoprotein</keyword>
<keyword id="KW-0689">Ribosomal protein</keyword>
<keyword id="KW-0694">RNA-binding</keyword>
<keyword id="KW-0699">rRNA-binding</keyword>
<keyword id="KW-0820">tRNA-binding</keyword>
<accession>P13577</accession>
<name>RS7_ARTPT</name>
<dbReference type="EMBL" id="X15646">
    <property type="protein sequence ID" value="CAA33671.1"/>
    <property type="molecule type" value="Genomic_DNA"/>
</dbReference>
<dbReference type="PIR" id="S04389">
    <property type="entry name" value="R3SG7"/>
</dbReference>
<dbReference type="SMR" id="P13577"/>
<dbReference type="OMA" id="DDTHRMA"/>
<dbReference type="GO" id="GO:0015935">
    <property type="term" value="C:small ribosomal subunit"/>
    <property type="evidence" value="ECO:0007669"/>
    <property type="project" value="InterPro"/>
</dbReference>
<dbReference type="GO" id="GO:0019843">
    <property type="term" value="F:rRNA binding"/>
    <property type="evidence" value="ECO:0007669"/>
    <property type="project" value="UniProtKB-UniRule"/>
</dbReference>
<dbReference type="GO" id="GO:0003735">
    <property type="term" value="F:structural constituent of ribosome"/>
    <property type="evidence" value="ECO:0007669"/>
    <property type="project" value="InterPro"/>
</dbReference>
<dbReference type="GO" id="GO:0000049">
    <property type="term" value="F:tRNA binding"/>
    <property type="evidence" value="ECO:0007669"/>
    <property type="project" value="UniProtKB-UniRule"/>
</dbReference>
<dbReference type="GO" id="GO:0006412">
    <property type="term" value="P:translation"/>
    <property type="evidence" value="ECO:0007669"/>
    <property type="project" value="UniProtKB-UniRule"/>
</dbReference>
<dbReference type="CDD" id="cd14871">
    <property type="entry name" value="uS7_Chloroplast"/>
    <property type="match status" value="1"/>
</dbReference>
<dbReference type="FunFam" id="1.10.455.10:FF:000001">
    <property type="entry name" value="30S ribosomal protein S7"/>
    <property type="match status" value="1"/>
</dbReference>
<dbReference type="Gene3D" id="1.10.455.10">
    <property type="entry name" value="Ribosomal protein S7 domain"/>
    <property type="match status" value="1"/>
</dbReference>
<dbReference type="HAMAP" id="MF_00480_B">
    <property type="entry name" value="Ribosomal_uS7_B"/>
    <property type="match status" value="1"/>
</dbReference>
<dbReference type="InterPro" id="IPR000235">
    <property type="entry name" value="Ribosomal_uS7"/>
</dbReference>
<dbReference type="InterPro" id="IPR005717">
    <property type="entry name" value="Ribosomal_uS7_bac/org-type"/>
</dbReference>
<dbReference type="InterPro" id="IPR020606">
    <property type="entry name" value="Ribosomal_uS7_CS"/>
</dbReference>
<dbReference type="InterPro" id="IPR023798">
    <property type="entry name" value="Ribosomal_uS7_dom"/>
</dbReference>
<dbReference type="InterPro" id="IPR036823">
    <property type="entry name" value="Ribosomal_uS7_dom_sf"/>
</dbReference>
<dbReference type="NCBIfam" id="TIGR01029">
    <property type="entry name" value="rpsG_bact"/>
    <property type="match status" value="1"/>
</dbReference>
<dbReference type="PANTHER" id="PTHR11205">
    <property type="entry name" value="RIBOSOMAL PROTEIN S7"/>
    <property type="match status" value="1"/>
</dbReference>
<dbReference type="Pfam" id="PF00177">
    <property type="entry name" value="Ribosomal_S7"/>
    <property type="match status" value="1"/>
</dbReference>
<dbReference type="PIRSF" id="PIRSF002122">
    <property type="entry name" value="RPS7p_RPS7a_RPS5e_RPS7o"/>
    <property type="match status" value="1"/>
</dbReference>
<dbReference type="SUPFAM" id="SSF47973">
    <property type="entry name" value="Ribosomal protein S7"/>
    <property type="match status" value="1"/>
</dbReference>
<dbReference type="PROSITE" id="PS00052">
    <property type="entry name" value="RIBOSOMAL_S7"/>
    <property type="match status" value="1"/>
</dbReference>
<sequence length="156" mass="17884">MSRRRVVQKRPVPPDSRYNSRLVSMMVRRIMRHGKKSVAHNIVYDALATIEERTGSDPLELFEKAVRNATPLVEVKARRVGGATYQVPMEVRSERGTTLALRWLIHFSRTRSGRSMASRLASELMDAANETGSAVRKREETHRMAEANKAFAHYRY</sequence>
<organism>
    <name type="scientific">Arthrospira platensis</name>
    <name type="common">Spirulina platensis</name>
    <dbReference type="NCBI Taxonomy" id="118562"/>
    <lineage>
        <taxon>Bacteria</taxon>
        <taxon>Bacillati</taxon>
        <taxon>Cyanobacteriota</taxon>
        <taxon>Cyanophyceae</taxon>
        <taxon>Oscillatoriophycideae</taxon>
        <taxon>Oscillatoriales</taxon>
        <taxon>Microcoleaceae</taxon>
        <taxon>Arthrospira</taxon>
    </lineage>
</organism>